<evidence type="ECO:0000250" key="1"/>
<evidence type="ECO:0000255" key="2"/>
<evidence type="ECO:0000255" key="3">
    <source>
        <dbReference type="PROSITE-ProRule" id="PRU00202"/>
    </source>
</evidence>
<evidence type="ECO:0000256" key="4">
    <source>
        <dbReference type="SAM" id="MobiDB-lite"/>
    </source>
</evidence>
<evidence type="ECO:0000305" key="5"/>
<accession>O13932</accession>
<feature type="chain" id="PRO_0000206891" description="Protein transport protein bet1">
    <location>
        <begin position="1"/>
        <end position="117"/>
    </location>
</feature>
<feature type="topological domain" description="Cytoplasmic" evidence="2">
    <location>
        <begin position="1"/>
        <end position="94"/>
    </location>
</feature>
<feature type="transmembrane region" description="Helical; Anchor for type IV membrane protein" evidence="2">
    <location>
        <begin position="95"/>
        <end position="115"/>
    </location>
</feature>
<feature type="topological domain" description="Vesicular" evidence="2">
    <location>
        <begin position="116"/>
        <end position="117"/>
    </location>
</feature>
<feature type="domain" description="t-SNARE coiled-coil homology" evidence="3">
    <location>
        <begin position="28"/>
        <end position="90"/>
    </location>
</feature>
<feature type="region of interest" description="Disordered" evidence="4">
    <location>
        <begin position="1"/>
        <end position="20"/>
    </location>
</feature>
<feature type="compositionally biased region" description="Basic residues" evidence="4">
    <location>
        <begin position="1"/>
        <end position="10"/>
    </location>
</feature>
<dbReference type="EMBL" id="CU329670">
    <property type="protein sequence ID" value="CAB16884.1"/>
    <property type="molecule type" value="Genomic_DNA"/>
</dbReference>
<dbReference type="PIR" id="T38268">
    <property type="entry name" value="T38268"/>
</dbReference>
<dbReference type="RefSeq" id="NP_593185.1">
    <property type="nucleotide sequence ID" value="NM_001018581.2"/>
</dbReference>
<dbReference type="SMR" id="O13932"/>
<dbReference type="BioGRID" id="278545">
    <property type="interactions" value="3"/>
</dbReference>
<dbReference type="FunCoup" id="O13932">
    <property type="interactions" value="257"/>
</dbReference>
<dbReference type="STRING" id="284812.O13932"/>
<dbReference type="iPTMnet" id="O13932"/>
<dbReference type="PaxDb" id="4896-SPAC23C4.13.1"/>
<dbReference type="EnsemblFungi" id="SPAC23C4.13.1">
    <property type="protein sequence ID" value="SPAC23C4.13.1:pep"/>
    <property type="gene ID" value="SPAC23C4.13"/>
</dbReference>
<dbReference type="GeneID" id="2542068"/>
<dbReference type="KEGG" id="spo:2542068"/>
<dbReference type="PomBase" id="SPAC23C4.13">
    <property type="gene designation" value="bet1"/>
</dbReference>
<dbReference type="VEuPathDB" id="FungiDB:SPAC23C4.13"/>
<dbReference type="eggNOG" id="KOG3385">
    <property type="taxonomic scope" value="Eukaryota"/>
</dbReference>
<dbReference type="HOGENOM" id="CLU_086133_3_1_1"/>
<dbReference type="InParanoid" id="O13932"/>
<dbReference type="OMA" id="FFWVWIT"/>
<dbReference type="PhylomeDB" id="O13932"/>
<dbReference type="Reactome" id="R-SPO-204005">
    <property type="pathway name" value="COPII-mediated vesicle transport"/>
</dbReference>
<dbReference type="Reactome" id="R-SPO-6807878">
    <property type="pathway name" value="COPI-mediated anterograde transport"/>
</dbReference>
<dbReference type="Reactome" id="R-SPO-6811438">
    <property type="pathway name" value="Intra-Golgi traffic"/>
</dbReference>
<dbReference type="PRO" id="PR:O13932"/>
<dbReference type="Proteomes" id="UP000002485">
    <property type="component" value="Chromosome I"/>
</dbReference>
<dbReference type="GO" id="GO:0005783">
    <property type="term" value="C:endoplasmic reticulum"/>
    <property type="evidence" value="ECO:0007005"/>
    <property type="project" value="PomBase"/>
</dbReference>
<dbReference type="GO" id="GO:0005789">
    <property type="term" value="C:endoplasmic reticulum membrane"/>
    <property type="evidence" value="ECO:0007669"/>
    <property type="project" value="UniProtKB-SubCell"/>
</dbReference>
<dbReference type="GO" id="GO:0000329">
    <property type="term" value="C:fungal-type vacuole membrane"/>
    <property type="evidence" value="ECO:0007005"/>
    <property type="project" value="PomBase"/>
</dbReference>
<dbReference type="GO" id="GO:0005794">
    <property type="term" value="C:Golgi apparatus"/>
    <property type="evidence" value="ECO:0007005"/>
    <property type="project" value="PomBase"/>
</dbReference>
<dbReference type="GO" id="GO:0000139">
    <property type="term" value="C:Golgi membrane"/>
    <property type="evidence" value="ECO:0007669"/>
    <property type="project" value="UniProtKB-SubCell"/>
</dbReference>
<dbReference type="GO" id="GO:0005484">
    <property type="term" value="F:SNAP receptor activity"/>
    <property type="evidence" value="ECO:0000250"/>
    <property type="project" value="PomBase"/>
</dbReference>
<dbReference type="GO" id="GO:0006888">
    <property type="term" value="P:endoplasmic reticulum to Golgi vesicle-mediated transport"/>
    <property type="evidence" value="ECO:0000318"/>
    <property type="project" value="GO_Central"/>
</dbReference>
<dbReference type="GO" id="GO:0006886">
    <property type="term" value="P:intracellular protein transport"/>
    <property type="evidence" value="ECO:0000303"/>
    <property type="project" value="PomBase"/>
</dbReference>
<dbReference type="CDD" id="cd15853">
    <property type="entry name" value="SNARE_Bet1"/>
    <property type="match status" value="1"/>
</dbReference>
<dbReference type="Gene3D" id="1.20.5.110">
    <property type="match status" value="1"/>
</dbReference>
<dbReference type="InterPro" id="IPR039899">
    <property type="entry name" value="BET1_SNARE"/>
</dbReference>
<dbReference type="InterPro" id="IPR000727">
    <property type="entry name" value="T_SNARE_dom"/>
</dbReference>
<dbReference type="PANTHER" id="PTHR12791">
    <property type="entry name" value="GOLGI SNARE BET1-RELATED"/>
    <property type="match status" value="1"/>
</dbReference>
<dbReference type="SMART" id="SM00397">
    <property type="entry name" value="t_SNARE"/>
    <property type="match status" value="1"/>
</dbReference>
<dbReference type="SUPFAM" id="SSF58038">
    <property type="entry name" value="SNARE fusion complex"/>
    <property type="match status" value="1"/>
</dbReference>
<dbReference type="PROSITE" id="PS50192">
    <property type="entry name" value="T_SNARE"/>
    <property type="match status" value="1"/>
</dbReference>
<protein>
    <recommendedName>
        <fullName>Protein transport protein bet1</fullName>
    </recommendedName>
</protein>
<keyword id="KW-0175">Coiled coil</keyword>
<keyword id="KW-0256">Endoplasmic reticulum</keyword>
<keyword id="KW-0931">ER-Golgi transport</keyword>
<keyword id="KW-0333">Golgi apparatus</keyword>
<keyword id="KW-0472">Membrane</keyword>
<keyword id="KW-0653">Protein transport</keyword>
<keyword id="KW-1185">Reference proteome</keyword>
<keyword id="KW-0812">Transmembrane</keyword>
<keyword id="KW-1133">Transmembrane helix</keyword>
<keyword id="KW-0813">Transport</keyword>
<reference key="1">
    <citation type="journal article" date="2002" name="Nature">
        <title>The genome sequence of Schizosaccharomyces pombe.</title>
        <authorList>
            <person name="Wood V."/>
            <person name="Gwilliam R."/>
            <person name="Rajandream M.A."/>
            <person name="Lyne M.H."/>
            <person name="Lyne R."/>
            <person name="Stewart A."/>
            <person name="Sgouros J.G."/>
            <person name="Peat N."/>
            <person name="Hayles J."/>
            <person name="Baker S.G."/>
            <person name="Basham D."/>
            <person name="Bowman S."/>
            <person name="Brooks K."/>
            <person name="Brown D."/>
            <person name="Brown S."/>
            <person name="Chillingworth T."/>
            <person name="Churcher C.M."/>
            <person name="Collins M."/>
            <person name="Connor R."/>
            <person name="Cronin A."/>
            <person name="Davis P."/>
            <person name="Feltwell T."/>
            <person name="Fraser A."/>
            <person name="Gentles S."/>
            <person name="Goble A."/>
            <person name="Hamlin N."/>
            <person name="Harris D.E."/>
            <person name="Hidalgo J."/>
            <person name="Hodgson G."/>
            <person name="Holroyd S."/>
            <person name="Hornsby T."/>
            <person name="Howarth S."/>
            <person name="Huckle E.J."/>
            <person name="Hunt S."/>
            <person name="Jagels K."/>
            <person name="James K.D."/>
            <person name="Jones L."/>
            <person name="Jones M."/>
            <person name="Leather S."/>
            <person name="McDonald S."/>
            <person name="McLean J."/>
            <person name="Mooney P."/>
            <person name="Moule S."/>
            <person name="Mungall K.L."/>
            <person name="Murphy L.D."/>
            <person name="Niblett D."/>
            <person name="Odell C."/>
            <person name="Oliver K."/>
            <person name="O'Neil S."/>
            <person name="Pearson D."/>
            <person name="Quail M.A."/>
            <person name="Rabbinowitsch E."/>
            <person name="Rutherford K.M."/>
            <person name="Rutter S."/>
            <person name="Saunders D."/>
            <person name="Seeger K."/>
            <person name="Sharp S."/>
            <person name="Skelton J."/>
            <person name="Simmonds M.N."/>
            <person name="Squares R."/>
            <person name="Squares S."/>
            <person name="Stevens K."/>
            <person name="Taylor K."/>
            <person name="Taylor R.G."/>
            <person name="Tivey A."/>
            <person name="Walsh S.V."/>
            <person name="Warren T."/>
            <person name="Whitehead S."/>
            <person name="Woodward J.R."/>
            <person name="Volckaert G."/>
            <person name="Aert R."/>
            <person name="Robben J."/>
            <person name="Grymonprez B."/>
            <person name="Weltjens I."/>
            <person name="Vanstreels E."/>
            <person name="Rieger M."/>
            <person name="Schaefer M."/>
            <person name="Mueller-Auer S."/>
            <person name="Gabel C."/>
            <person name="Fuchs M."/>
            <person name="Duesterhoeft A."/>
            <person name="Fritzc C."/>
            <person name="Holzer E."/>
            <person name="Moestl D."/>
            <person name="Hilbert H."/>
            <person name="Borzym K."/>
            <person name="Langer I."/>
            <person name="Beck A."/>
            <person name="Lehrach H."/>
            <person name="Reinhardt R."/>
            <person name="Pohl T.M."/>
            <person name="Eger P."/>
            <person name="Zimmermann W."/>
            <person name="Wedler H."/>
            <person name="Wambutt R."/>
            <person name="Purnelle B."/>
            <person name="Goffeau A."/>
            <person name="Cadieu E."/>
            <person name="Dreano S."/>
            <person name="Gloux S."/>
            <person name="Lelaure V."/>
            <person name="Mottier S."/>
            <person name="Galibert F."/>
            <person name="Aves S.J."/>
            <person name="Xiang Z."/>
            <person name="Hunt C."/>
            <person name="Moore K."/>
            <person name="Hurst S.M."/>
            <person name="Lucas M."/>
            <person name="Rochet M."/>
            <person name="Gaillardin C."/>
            <person name="Tallada V.A."/>
            <person name="Garzon A."/>
            <person name="Thode G."/>
            <person name="Daga R.R."/>
            <person name="Cruzado L."/>
            <person name="Jimenez J."/>
            <person name="Sanchez M."/>
            <person name="del Rey F."/>
            <person name="Benito J."/>
            <person name="Dominguez A."/>
            <person name="Revuelta J.L."/>
            <person name="Moreno S."/>
            <person name="Armstrong J."/>
            <person name="Forsburg S.L."/>
            <person name="Cerutti L."/>
            <person name="Lowe T."/>
            <person name="McCombie W.R."/>
            <person name="Paulsen I."/>
            <person name="Potashkin J."/>
            <person name="Shpakovski G.V."/>
            <person name="Ussery D."/>
            <person name="Barrell B.G."/>
            <person name="Nurse P."/>
        </authorList>
    </citation>
    <scope>NUCLEOTIDE SEQUENCE [LARGE SCALE GENOMIC DNA]</scope>
    <source>
        <strain>972 / ATCC 24843</strain>
    </source>
</reference>
<proteinExistence type="inferred from homology"/>
<name>BET1_SCHPO</name>
<gene>
    <name type="primary">bet1</name>
    <name type="ORF">SPAC23C4.13</name>
</gene>
<organism>
    <name type="scientific">Schizosaccharomyces pombe (strain 972 / ATCC 24843)</name>
    <name type="common">Fission yeast</name>
    <dbReference type="NCBI Taxonomy" id="284812"/>
    <lineage>
        <taxon>Eukaryota</taxon>
        <taxon>Fungi</taxon>
        <taxon>Dikarya</taxon>
        <taxon>Ascomycota</taxon>
        <taxon>Taphrinomycotina</taxon>
        <taxon>Schizosaccharomycetes</taxon>
        <taxon>Schizosaccharomycetales</taxon>
        <taxon>Schizosaccharomycetaceae</taxon>
        <taxon>Schizosaccharomyces</taxon>
    </lineage>
</organism>
<comment type="function">
    <text evidence="1">SNARE required for targeting and fusion of ER-derived transport vesicles with the Golgi complex.</text>
</comment>
<comment type="subunit">
    <text evidence="1">Component of a SNARE complex consisting of sed5, bos1, bet1 and sec22 or ykt6.</text>
</comment>
<comment type="subcellular location">
    <subcellularLocation>
        <location evidence="5">Golgi apparatus membrane</location>
        <topology evidence="5">Single-pass type IV membrane protein</topology>
    </subcellularLocation>
    <subcellularLocation>
        <location evidence="5">Endoplasmic reticulum membrane</location>
        <topology evidence="5">Single-pass type IV membrane protein</topology>
    </subcellularLocation>
</comment>
<comment type="similarity">
    <text evidence="5">Belongs to the BET1 family.</text>
</comment>
<sequence length="117" mass="13251">MGSRFGRRKERNGDMLPLYESQSPQHLDSLENENDERISKLTGKVKSLKELTMNIGTEITSSTKLMESMNDSFDSTKSLLSGTMTRLKNVSKNGGISIWMWLAFFCLVALILVLVRF</sequence>